<name>ACKA_HISS1</name>
<gene>
    <name evidence="1" type="primary">ackA</name>
    <name type="ordered locus">HS_0803</name>
</gene>
<organism>
    <name type="scientific">Histophilus somni (strain 129Pt)</name>
    <name type="common">Haemophilus somnus</name>
    <dbReference type="NCBI Taxonomy" id="205914"/>
    <lineage>
        <taxon>Bacteria</taxon>
        <taxon>Pseudomonadati</taxon>
        <taxon>Pseudomonadota</taxon>
        <taxon>Gammaproteobacteria</taxon>
        <taxon>Pasteurellales</taxon>
        <taxon>Pasteurellaceae</taxon>
        <taxon>Histophilus</taxon>
    </lineage>
</organism>
<protein>
    <recommendedName>
        <fullName evidence="1">Acetate kinase</fullName>
        <ecNumber evidence="1">2.7.2.1</ecNumber>
    </recommendedName>
    <alternativeName>
        <fullName evidence="1">Acetokinase</fullName>
    </alternativeName>
</protein>
<accession>Q0I3R3</accession>
<feature type="chain" id="PRO_1000002236" description="Acetate kinase">
    <location>
        <begin position="1"/>
        <end position="398"/>
    </location>
</feature>
<feature type="active site" description="Proton donor/acceptor" evidence="1">
    <location>
        <position position="148"/>
    </location>
</feature>
<feature type="binding site" evidence="1">
    <location>
        <position position="10"/>
    </location>
    <ligand>
        <name>Mg(2+)</name>
        <dbReference type="ChEBI" id="CHEBI:18420"/>
    </ligand>
</feature>
<feature type="binding site" evidence="1">
    <location>
        <position position="17"/>
    </location>
    <ligand>
        <name>ATP</name>
        <dbReference type="ChEBI" id="CHEBI:30616"/>
    </ligand>
</feature>
<feature type="binding site" evidence="1">
    <location>
        <position position="89"/>
    </location>
    <ligand>
        <name>substrate</name>
    </ligand>
</feature>
<feature type="binding site" evidence="1">
    <location>
        <begin position="208"/>
        <end position="212"/>
    </location>
    <ligand>
        <name>ATP</name>
        <dbReference type="ChEBI" id="CHEBI:30616"/>
    </ligand>
</feature>
<feature type="binding site" evidence="1">
    <location>
        <begin position="283"/>
        <end position="285"/>
    </location>
    <ligand>
        <name>ATP</name>
        <dbReference type="ChEBI" id="CHEBI:30616"/>
    </ligand>
</feature>
<feature type="binding site" evidence="1">
    <location>
        <begin position="331"/>
        <end position="335"/>
    </location>
    <ligand>
        <name>ATP</name>
        <dbReference type="ChEBI" id="CHEBI:30616"/>
    </ligand>
</feature>
<feature type="binding site" evidence="1">
    <location>
        <position position="385"/>
    </location>
    <ligand>
        <name>Mg(2+)</name>
        <dbReference type="ChEBI" id="CHEBI:18420"/>
    </ligand>
</feature>
<feature type="site" description="Transition state stabilizer" evidence="1">
    <location>
        <position position="180"/>
    </location>
</feature>
<feature type="site" description="Transition state stabilizer" evidence="1">
    <location>
        <position position="241"/>
    </location>
</feature>
<reference key="1">
    <citation type="journal article" date="2007" name="J. Bacteriol.">
        <title>Complete genome sequence of Haemophilus somnus (Histophilus somni) strain 129Pt and comparison to Haemophilus ducreyi 35000HP and Haemophilus influenzae Rd.</title>
        <authorList>
            <person name="Challacombe J.F."/>
            <person name="Duncan A.J."/>
            <person name="Brettin T.S."/>
            <person name="Bruce D."/>
            <person name="Chertkov O."/>
            <person name="Detter J.C."/>
            <person name="Han C.S."/>
            <person name="Misra M."/>
            <person name="Richardson P."/>
            <person name="Tapia R."/>
            <person name="Thayer N."/>
            <person name="Xie G."/>
            <person name="Inzana T.J."/>
        </authorList>
    </citation>
    <scope>NUCLEOTIDE SEQUENCE [LARGE SCALE GENOMIC DNA]</scope>
    <source>
        <strain>129Pt</strain>
    </source>
</reference>
<proteinExistence type="inferred from homology"/>
<evidence type="ECO:0000255" key="1">
    <source>
        <dbReference type="HAMAP-Rule" id="MF_00020"/>
    </source>
</evidence>
<dbReference type="EC" id="2.7.2.1" evidence="1"/>
<dbReference type="EMBL" id="CP000436">
    <property type="protein sequence ID" value="ABI25078.1"/>
    <property type="molecule type" value="Genomic_DNA"/>
</dbReference>
<dbReference type="SMR" id="Q0I3R3"/>
<dbReference type="KEGG" id="hso:HS_0803"/>
<dbReference type="eggNOG" id="COG0282">
    <property type="taxonomic scope" value="Bacteria"/>
</dbReference>
<dbReference type="HOGENOM" id="CLU_020352_0_0_6"/>
<dbReference type="UniPathway" id="UPA00340">
    <property type="reaction ID" value="UER00458"/>
</dbReference>
<dbReference type="GO" id="GO:0005829">
    <property type="term" value="C:cytosol"/>
    <property type="evidence" value="ECO:0007669"/>
    <property type="project" value="TreeGrafter"/>
</dbReference>
<dbReference type="GO" id="GO:0008776">
    <property type="term" value="F:acetate kinase activity"/>
    <property type="evidence" value="ECO:0007669"/>
    <property type="project" value="UniProtKB-UniRule"/>
</dbReference>
<dbReference type="GO" id="GO:0005524">
    <property type="term" value="F:ATP binding"/>
    <property type="evidence" value="ECO:0007669"/>
    <property type="project" value="UniProtKB-KW"/>
</dbReference>
<dbReference type="GO" id="GO:0000287">
    <property type="term" value="F:magnesium ion binding"/>
    <property type="evidence" value="ECO:0007669"/>
    <property type="project" value="UniProtKB-UniRule"/>
</dbReference>
<dbReference type="GO" id="GO:0006083">
    <property type="term" value="P:acetate metabolic process"/>
    <property type="evidence" value="ECO:0007669"/>
    <property type="project" value="TreeGrafter"/>
</dbReference>
<dbReference type="GO" id="GO:0006085">
    <property type="term" value="P:acetyl-CoA biosynthetic process"/>
    <property type="evidence" value="ECO:0007669"/>
    <property type="project" value="UniProtKB-UniRule"/>
</dbReference>
<dbReference type="CDD" id="cd24010">
    <property type="entry name" value="ASKHA_NBD_AcK_PK"/>
    <property type="match status" value="1"/>
</dbReference>
<dbReference type="FunFam" id="3.30.420.40:FF:000041">
    <property type="entry name" value="Acetate kinase"/>
    <property type="match status" value="1"/>
</dbReference>
<dbReference type="FunFam" id="3.30.420.40:FF:000042">
    <property type="entry name" value="Acetate kinase"/>
    <property type="match status" value="1"/>
</dbReference>
<dbReference type="Gene3D" id="3.30.420.40">
    <property type="match status" value="2"/>
</dbReference>
<dbReference type="HAMAP" id="MF_00020">
    <property type="entry name" value="Acetate_kinase"/>
    <property type="match status" value="1"/>
</dbReference>
<dbReference type="InterPro" id="IPR004372">
    <property type="entry name" value="Ac/propionate_kinase"/>
</dbReference>
<dbReference type="InterPro" id="IPR000890">
    <property type="entry name" value="Aliphatic_acid_kin_short-chain"/>
</dbReference>
<dbReference type="InterPro" id="IPR023865">
    <property type="entry name" value="Aliphatic_acid_kinase_CS"/>
</dbReference>
<dbReference type="InterPro" id="IPR043129">
    <property type="entry name" value="ATPase_NBD"/>
</dbReference>
<dbReference type="NCBIfam" id="TIGR00016">
    <property type="entry name" value="ackA"/>
    <property type="match status" value="1"/>
</dbReference>
<dbReference type="PANTHER" id="PTHR21060">
    <property type="entry name" value="ACETATE KINASE"/>
    <property type="match status" value="1"/>
</dbReference>
<dbReference type="PANTHER" id="PTHR21060:SF21">
    <property type="entry name" value="ACETATE KINASE"/>
    <property type="match status" value="1"/>
</dbReference>
<dbReference type="Pfam" id="PF00871">
    <property type="entry name" value="Acetate_kinase"/>
    <property type="match status" value="1"/>
</dbReference>
<dbReference type="PIRSF" id="PIRSF000722">
    <property type="entry name" value="Acetate_prop_kin"/>
    <property type="match status" value="1"/>
</dbReference>
<dbReference type="PRINTS" id="PR00471">
    <property type="entry name" value="ACETATEKNASE"/>
</dbReference>
<dbReference type="SUPFAM" id="SSF53067">
    <property type="entry name" value="Actin-like ATPase domain"/>
    <property type="match status" value="2"/>
</dbReference>
<dbReference type="PROSITE" id="PS01075">
    <property type="entry name" value="ACETATE_KINASE_1"/>
    <property type="match status" value="1"/>
</dbReference>
<dbReference type="PROSITE" id="PS01076">
    <property type="entry name" value="ACETATE_KINASE_2"/>
    <property type="match status" value="1"/>
</dbReference>
<comment type="function">
    <text evidence="1">Catalyzes the formation of acetyl phosphate from acetate and ATP. Can also catalyze the reverse reaction.</text>
</comment>
<comment type="catalytic activity">
    <reaction evidence="1">
        <text>acetate + ATP = acetyl phosphate + ADP</text>
        <dbReference type="Rhea" id="RHEA:11352"/>
        <dbReference type="ChEBI" id="CHEBI:22191"/>
        <dbReference type="ChEBI" id="CHEBI:30089"/>
        <dbReference type="ChEBI" id="CHEBI:30616"/>
        <dbReference type="ChEBI" id="CHEBI:456216"/>
        <dbReference type="EC" id="2.7.2.1"/>
    </reaction>
</comment>
<comment type="cofactor">
    <cofactor evidence="1">
        <name>Mg(2+)</name>
        <dbReference type="ChEBI" id="CHEBI:18420"/>
    </cofactor>
    <cofactor evidence="1">
        <name>Mn(2+)</name>
        <dbReference type="ChEBI" id="CHEBI:29035"/>
    </cofactor>
    <text evidence="1">Mg(2+). Can also accept Mn(2+).</text>
</comment>
<comment type="pathway">
    <text evidence="1">Metabolic intermediate biosynthesis; acetyl-CoA biosynthesis; acetyl-CoA from acetate: step 1/2.</text>
</comment>
<comment type="subunit">
    <text evidence="1">Homodimer.</text>
</comment>
<comment type="subcellular location">
    <subcellularLocation>
        <location evidence="1">Cytoplasm</location>
    </subcellularLocation>
</comment>
<comment type="similarity">
    <text evidence="1">Belongs to the acetokinase family.</text>
</comment>
<sequence length="398" mass="43303">MSQKLVLILNCGSSSLKFAILDPVSGAEKLSGLAEAFYLPDARIKWKLNGEKGNADLGAGAAHSEALNFIVSTILTEDLKNSIAAIGHRVVHGGEKYTKSVVITDEVIQGIKDAAEFAPLHNPAHLIGIEEAFKAFPHLKDNNVAIFDTAFHQTMPEEAFLYALPYSLYKEHGVRRYGMHGTSHYFVSREAAKRLNIAEDKINVITCHLGNGASVAAIRQGKCIDTSMGFTPLEGLVMGTRSGDLDPAIIFYMHNTLGMSVAQIEETLVKKSGLLGLTEVTSDCRYSEDNYEKESAAKRALDVFCYRLAKYIGSYMAIIGENLDAIVFTGGIGENAALVRQITLNHLKLFGYKIDDEKNSAARFGNEGVITADNTPIAIVIPTNEELVIAQDTARLSF</sequence>
<keyword id="KW-0067">ATP-binding</keyword>
<keyword id="KW-0963">Cytoplasm</keyword>
<keyword id="KW-0418">Kinase</keyword>
<keyword id="KW-0460">Magnesium</keyword>
<keyword id="KW-0479">Metal-binding</keyword>
<keyword id="KW-0547">Nucleotide-binding</keyword>
<keyword id="KW-0808">Transferase</keyword>